<organism>
    <name type="scientific">Caldicellulosiruptor saccharolyticus (strain ATCC 43494 / DSM 8903 / Tp8T 6331)</name>
    <dbReference type="NCBI Taxonomy" id="351627"/>
    <lineage>
        <taxon>Bacteria</taxon>
        <taxon>Bacillati</taxon>
        <taxon>Bacillota</taxon>
        <taxon>Bacillota incertae sedis</taxon>
        <taxon>Caldicellulosiruptorales</taxon>
        <taxon>Caldicellulosiruptoraceae</taxon>
        <taxon>Caldicellulosiruptor</taxon>
    </lineage>
</organism>
<dbReference type="EMBL" id="CP000679">
    <property type="protein sequence ID" value="ABP66788.1"/>
    <property type="molecule type" value="Genomic_DNA"/>
</dbReference>
<dbReference type="RefSeq" id="WP_011916724.1">
    <property type="nucleotide sequence ID" value="NC_009437.1"/>
</dbReference>
<dbReference type="SMR" id="A4XIQ3"/>
<dbReference type="STRING" id="351627.Csac_1185"/>
<dbReference type="KEGG" id="csc:Csac_1185"/>
<dbReference type="eggNOG" id="COG0322">
    <property type="taxonomic scope" value="Bacteria"/>
</dbReference>
<dbReference type="HOGENOM" id="CLU_014841_3_2_9"/>
<dbReference type="Proteomes" id="UP000000256">
    <property type="component" value="Chromosome"/>
</dbReference>
<dbReference type="GO" id="GO:0005737">
    <property type="term" value="C:cytoplasm"/>
    <property type="evidence" value="ECO:0007669"/>
    <property type="project" value="UniProtKB-SubCell"/>
</dbReference>
<dbReference type="GO" id="GO:0009380">
    <property type="term" value="C:excinuclease repair complex"/>
    <property type="evidence" value="ECO:0007669"/>
    <property type="project" value="InterPro"/>
</dbReference>
<dbReference type="GO" id="GO:0003677">
    <property type="term" value="F:DNA binding"/>
    <property type="evidence" value="ECO:0007669"/>
    <property type="project" value="UniProtKB-UniRule"/>
</dbReference>
<dbReference type="GO" id="GO:0009381">
    <property type="term" value="F:excinuclease ABC activity"/>
    <property type="evidence" value="ECO:0007669"/>
    <property type="project" value="UniProtKB-UniRule"/>
</dbReference>
<dbReference type="GO" id="GO:0006289">
    <property type="term" value="P:nucleotide-excision repair"/>
    <property type="evidence" value="ECO:0007669"/>
    <property type="project" value="UniProtKB-UniRule"/>
</dbReference>
<dbReference type="GO" id="GO:0009432">
    <property type="term" value="P:SOS response"/>
    <property type="evidence" value="ECO:0007669"/>
    <property type="project" value="UniProtKB-UniRule"/>
</dbReference>
<dbReference type="CDD" id="cd10434">
    <property type="entry name" value="GIY-YIG_UvrC_Cho"/>
    <property type="match status" value="1"/>
</dbReference>
<dbReference type="FunFam" id="3.40.1440.10:FF:000001">
    <property type="entry name" value="UvrABC system protein C"/>
    <property type="match status" value="1"/>
</dbReference>
<dbReference type="Gene3D" id="1.10.150.20">
    <property type="entry name" value="5' to 3' exonuclease, C-terminal subdomain"/>
    <property type="match status" value="1"/>
</dbReference>
<dbReference type="Gene3D" id="3.40.1440.10">
    <property type="entry name" value="GIY-YIG endonuclease"/>
    <property type="match status" value="1"/>
</dbReference>
<dbReference type="Gene3D" id="4.10.860.10">
    <property type="entry name" value="UVR domain"/>
    <property type="match status" value="1"/>
</dbReference>
<dbReference type="Gene3D" id="3.30.420.340">
    <property type="entry name" value="UvrC, RNAse H endonuclease domain"/>
    <property type="match status" value="1"/>
</dbReference>
<dbReference type="HAMAP" id="MF_00203">
    <property type="entry name" value="UvrC"/>
    <property type="match status" value="1"/>
</dbReference>
<dbReference type="InterPro" id="IPR000305">
    <property type="entry name" value="GIY-YIG_endonuc"/>
</dbReference>
<dbReference type="InterPro" id="IPR035901">
    <property type="entry name" value="GIY-YIG_endonuc_sf"/>
</dbReference>
<dbReference type="InterPro" id="IPR047296">
    <property type="entry name" value="GIY-YIG_UvrC_Cho"/>
</dbReference>
<dbReference type="InterPro" id="IPR010994">
    <property type="entry name" value="RuvA_2-like"/>
</dbReference>
<dbReference type="InterPro" id="IPR001943">
    <property type="entry name" value="UVR_dom"/>
</dbReference>
<dbReference type="InterPro" id="IPR036876">
    <property type="entry name" value="UVR_dom_sf"/>
</dbReference>
<dbReference type="InterPro" id="IPR050066">
    <property type="entry name" value="UvrABC_protein_C"/>
</dbReference>
<dbReference type="InterPro" id="IPR004791">
    <property type="entry name" value="UvrC"/>
</dbReference>
<dbReference type="InterPro" id="IPR001162">
    <property type="entry name" value="UvrC_RNase_H_dom"/>
</dbReference>
<dbReference type="InterPro" id="IPR038476">
    <property type="entry name" value="UvrC_RNase_H_dom_sf"/>
</dbReference>
<dbReference type="NCBIfam" id="NF001824">
    <property type="entry name" value="PRK00558.1-5"/>
    <property type="match status" value="1"/>
</dbReference>
<dbReference type="NCBIfam" id="TIGR00194">
    <property type="entry name" value="uvrC"/>
    <property type="match status" value="1"/>
</dbReference>
<dbReference type="PANTHER" id="PTHR30562:SF1">
    <property type="entry name" value="UVRABC SYSTEM PROTEIN C"/>
    <property type="match status" value="1"/>
</dbReference>
<dbReference type="PANTHER" id="PTHR30562">
    <property type="entry name" value="UVRC/OXIDOREDUCTASE"/>
    <property type="match status" value="1"/>
</dbReference>
<dbReference type="Pfam" id="PF01541">
    <property type="entry name" value="GIY-YIG"/>
    <property type="match status" value="1"/>
</dbReference>
<dbReference type="Pfam" id="PF02151">
    <property type="entry name" value="UVR"/>
    <property type="match status" value="1"/>
</dbReference>
<dbReference type="Pfam" id="PF22920">
    <property type="entry name" value="UvrC_RNaseH"/>
    <property type="match status" value="1"/>
</dbReference>
<dbReference type="Pfam" id="PF08459">
    <property type="entry name" value="UvrC_RNaseH_dom"/>
    <property type="match status" value="1"/>
</dbReference>
<dbReference type="SMART" id="SM00465">
    <property type="entry name" value="GIYc"/>
    <property type="match status" value="1"/>
</dbReference>
<dbReference type="SUPFAM" id="SSF46600">
    <property type="entry name" value="C-terminal UvrC-binding domain of UvrB"/>
    <property type="match status" value="1"/>
</dbReference>
<dbReference type="SUPFAM" id="SSF82771">
    <property type="entry name" value="GIY-YIG endonuclease"/>
    <property type="match status" value="1"/>
</dbReference>
<dbReference type="SUPFAM" id="SSF47781">
    <property type="entry name" value="RuvA domain 2-like"/>
    <property type="match status" value="1"/>
</dbReference>
<dbReference type="PROSITE" id="PS50164">
    <property type="entry name" value="GIY_YIG"/>
    <property type="match status" value="1"/>
</dbReference>
<dbReference type="PROSITE" id="PS50151">
    <property type="entry name" value="UVR"/>
    <property type="match status" value="1"/>
</dbReference>
<dbReference type="PROSITE" id="PS50165">
    <property type="entry name" value="UVRC"/>
    <property type="match status" value="1"/>
</dbReference>
<gene>
    <name evidence="1" type="primary">uvrC</name>
    <name type="ordered locus">Csac_1185</name>
</gene>
<comment type="function">
    <text evidence="1">The UvrABC repair system catalyzes the recognition and processing of DNA lesions. UvrC both incises the 5' and 3' sides of the lesion. The N-terminal half is responsible for the 3' incision and the C-terminal half is responsible for the 5' incision.</text>
</comment>
<comment type="subunit">
    <text evidence="1">Interacts with UvrB in an incision complex.</text>
</comment>
<comment type="subcellular location">
    <subcellularLocation>
        <location evidence="1">Cytoplasm</location>
    </subcellularLocation>
</comment>
<comment type="similarity">
    <text evidence="1">Belongs to the UvrC family.</text>
</comment>
<feature type="chain" id="PRO_1000099467" description="UvrABC system protein C">
    <location>
        <begin position="1"/>
        <end position="593"/>
    </location>
</feature>
<feature type="domain" description="GIY-YIG" evidence="1">
    <location>
        <begin position="13"/>
        <end position="91"/>
    </location>
</feature>
<feature type="domain" description="UVR" evidence="1">
    <location>
        <begin position="202"/>
        <end position="237"/>
    </location>
</feature>
<accession>A4XIQ3</accession>
<sequence length="593" mass="68889">MLTLQEKLANLPTTPGVYMMKDENGKVIYVGKAVNLRNRVRQYFQNSDMTPKTRLMVKKIKDFEYIVTDTEVEALILECNLIKEYRPKYNVLLRDDKNYQYIKITNEMFPRLVTTRKVEKDGAKYFGPYVSGYSVKQTIELLKSLFMLRTCKRKFPDQLGKGRPCLNFYIERCLGVCKGDIPEEEYQKLVEKAVKVLSGKGDEIVEELKKKMFEYADNLMFEKAQEIKNKITSLEQIITKQKVIYADDRSEDVINYAEDSSNICIVVLVIRNGKLINKEEFVLKNDEEVFERFLEQYYSDVVSVPKEIILPHEVGNGENIEKMIEKLYGFKAKIVVPKQGEKKQLLEMAKKNAEISLVNKQRIENYYIEALLHLKNLLGIEHDIEKIESYDISNLAGADNVGTLVVFEDGKFNKDLYRKFKLKSFEGQDDIRSVKEVLTRRFTNLEKHGRLPDLILIDGGQNQVNAAVEVLRSLGFNIPVAGMVKDDRHKTRDLIYKGQELNIQRDSLVFKLISTIQEETHRFAVKYHRELRKKHLYESILDEIEGIGEKRKIKLFRIFGSIDNLRKASIEEIVKAADIPYDIALKIKEKIGI</sequence>
<keyword id="KW-0963">Cytoplasm</keyword>
<keyword id="KW-0227">DNA damage</keyword>
<keyword id="KW-0228">DNA excision</keyword>
<keyword id="KW-0234">DNA repair</keyword>
<keyword id="KW-0267">Excision nuclease</keyword>
<keyword id="KW-0742">SOS response</keyword>
<reference key="1">
    <citation type="submission" date="2007-04" db="EMBL/GenBank/DDBJ databases">
        <title>Genome sequence of the thermophilic hydrogen-producing bacterium Caldicellulosiruptor saccharolyticus DSM 8903.</title>
        <authorList>
            <person name="Copeland A."/>
            <person name="Lucas S."/>
            <person name="Lapidus A."/>
            <person name="Barry K."/>
            <person name="Detter J.C."/>
            <person name="Glavina del Rio T."/>
            <person name="Hammon N."/>
            <person name="Israni S."/>
            <person name="Dalin E."/>
            <person name="Tice H."/>
            <person name="Pitluck S."/>
            <person name="Kiss H."/>
            <person name="Brettin T."/>
            <person name="Bruce D."/>
            <person name="Han C."/>
            <person name="Schmutz J."/>
            <person name="Larimer F."/>
            <person name="Land M."/>
            <person name="Hauser L."/>
            <person name="Kyrpides N."/>
            <person name="Lykidis A."/>
            <person name="van de Werken H.J.G."/>
            <person name="Verhaart M.R.A."/>
            <person name="VanFossen A.L."/>
            <person name="Lewis D.L."/>
            <person name="Nichols J.D."/>
            <person name="Goorissen H.P."/>
            <person name="van Niel E.W.J."/>
            <person name="Stams F.J.M."/>
            <person name="Willquist K.U."/>
            <person name="Ward D.E."/>
            <person name="van der Oost J."/>
            <person name="Kelly R.M."/>
            <person name="Kengen S.M.W."/>
            <person name="Richardson P."/>
        </authorList>
    </citation>
    <scope>NUCLEOTIDE SEQUENCE [LARGE SCALE GENOMIC DNA]</scope>
    <source>
        <strain>ATCC 43494 / DSM 8903 / Tp8T 6331</strain>
    </source>
</reference>
<protein>
    <recommendedName>
        <fullName evidence="1">UvrABC system protein C</fullName>
        <shortName evidence="1">Protein UvrC</shortName>
    </recommendedName>
    <alternativeName>
        <fullName evidence="1">Excinuclease ABC subunit C</fullName>
    </alternativeName>
</protein>
<name>UVRC_CALS8</name>
<evidence type="ECO:0000255" key="1">
    <source>
        <dbReference type="HAMAP-Rule" id="MF_00203"/>
    </source>
</evidence>
<proteinExistence type="inferred from homology"/>